<accession>P9WGL8</accession>
<accession>L0T3S2</accession>
<accession>Q11156</accession>
<keyword id="KW-0238">DNA-binding</keyword>
<keyword id="KW-0597">Phosphoprotein</keyword>
<keyword id="KW-1185">Reference proteome</keyword>
<keyword id="KW-0346">Stress response</keyword>
<keyword id="KW-0804">Transcription</keyword>
<keyword id="KW-0805">Transcription regulation</keyword>
<keyword id="KW-0902">Two-component regulatory system</keyword>
<keyword id="KW-0843">Virulence</keyword>
<feature type="chain" id="PRO_0000428339" description="Sensory transduction protein RegX3">
    <location>
        <begin position="1"/>
        <end position="227"/>
    </location>
</feature>
<feature type="domain" description="Response regulatory" evidence="2">
    <location>
        <begin position="3"/>
        <end position="116"/>
    </location>
</feature>
<feature type="DNA-binding region" description="OmpR/PhoB-type" evidence="3">
    <location>
        <begin position="128"/>
        <end position="227"/>
    </location>
</feature>
<feature type="modified residue" description="4-aspartylphosphate" evidence="2">
    <location>
        <position position="52"/>
    </location>
</feature>
<organism>
    <name type="scientific">Mycobacterium tuberculosis (strain CDC 1551 / Oshkosh)</name>
    <dbReference type="NCBI Taxonomy" id="83331"/>
    <lineage>
        <taxon>Bacteria</taxon>
        <taxon>Bacillati</taxon>
        <taxon>Actinomycetota</taxon>
        <taxon>Actinomycetes</taxon>
        <taxon>Mycobacteriales</taxon>
        <taxon>Mycobacteriaceae</taxon>
        <taxon>Mycobacterium</taxon>
        <taxon>Mycobacterium tuberculosis complex</taxon>
    </lineage>
</organism>
<dbReference type="EMBL" id="AE000516">
    <property type="protein sequence ID" value="AAK44733.1"/>
    <property type="status" value="ALT_INIT"/>
    <property type="molecule type" value="Genomic_DNA"/>
</dbReference>
<dbReference type="PIR" id="F70744">
    <property type="entry name" value="F70744"/>
</dbReference>
<dbReference type="SMR" id="P9WGL8"/>
<dbReference type="KEGG" id="mtc:MT0510"/>
<dbReference type="PATRIC" id="fig|83331.31.peg.540"/>
<dbReference type="HOGENOM" id="CLU_000445_30_4_11"/>
<dbReference type="Proteomes" id="UP000001020">
    <property type="component" value="Chromosome"/>
</dbReference>
<dbReference type="GO" id="GO:0005829">
    <property type="term" value="C:cytosol"/>
    <property type="evidence" value="ECO:0007669"/>
    <property type="project" value="TreeGrafter"/>
</dbReference>
<dbReference type="GO" id="GO:0032993">
    <property type="term" value="C:protein-DNA complex"/>
    <property type="evidence" value="ECO:0007669"/>
    <property type="project" value="TreeGrafter"/>
</dbReference>
<dbReference type="GO" id="GO:0000156">
    <property type="term" value="F:phosphorelay response regulator activity"/>
    <property type="evidence" value="ECO:0007669"/>
    <property type="project" value="TreeGrafter"/>
</dbReference>
<dbReference type="GO" id="GO:0000976">
    <property type="term" value="F:transcription cis-regulatory region binding"/>
    <property type="evidence" value="ECO:0007669"/>
    <property type="project" value="TreeGrafter"/>
</dbReference>
<dbReference type="GO" id="GO:0006355">
    <property type="term" value="P:regulation of DNA-templated transcription"/>
    <property type="evidence" value="ECO:0007669"/>
    <property type="project" value="InterPro"/>
</dbReference>
<dbReference type="CDD" id="cd17621">
    <property type="entry name" value="REC_OmpR_RegX3-like"/>
    <property type="match status" value="1"/>
</dbReference>
<dbReference type="CDD" id="cd00383">
    <property type="entry name" value="trans_reg_C"/>
    <property type="match status" value="1"/>
</dbReference>
<dbReference type="FunFam" id="3.40.50.2300:FF:000001">
    <property type="entry name" value="DNA-binding response regulator PhoB"/>
    <property type="match status" value="1"/>
</dbReference>
<dbReference type="FunFam" id="1.10.10.10:FF:000110">
    <property type="entry name" value="DNA-binding response regulator RegX3"/>
    <property type="match status" value="1"/>
</dbReference>
<dbReference type="Gene3D" id="3.40.50.2300">
    <property type="match status" value="1"/>
</dbReference>
<dbReference type="Gene3D" id="6.10.250.690">
    <property type="match status" value="1"/>
</dbReference>
<dbReference type="Gene3D" id="1.10.10.10">
    <property type="entry name" value="Winged helix-like DNA-binding domain superfamily/Winged helix DNA-binding domain"/>
    <property type="match status" value="1"/>
</dbReference>
<dbReference type="InterPro" id="IPR011006">
    <property type="entry name" value="CheY-like_superfamily"/>
</dbReference>
<dbReference type="InterPro" id="IPR001867">
    <property type="entry name" value="OmpR/PhoB-type_DNA-bd"/>
</dbReference>
<dbReference type="InterPro" id="IPR016032">
    <property type="entry name" value="Sig_transdc_resp-reg_C-effctor"/>
</dbReference>
<dbReference type="InterPro" id="IPR001789">
    <property type="entry name" value="Sig_transdc_resp-reg_receiver"/>
</dbReference>
<dbReference type="InterPro" id="IPR039420">
    <property type="entry name" value="WalR-like"/>
</dbReference>
<dbReference type="InterPro" id="IPR036388">
    <property type="entry name" value="WH-like_DNA-bd_sf"/>
</dbReference>
<dbReference type="PANTHER" id="PTHR48111">
    <property type="entry name" value="REGULATOR OF RPOS"/>
    <property type="match status" value="1"/>
</dbReference>
<dbReference type="PANTHER" id="PTHR48111:SF72">
    <property type="entry name" value="SENSORY TRANSDUCTION PROTEIN REGX3"/>
    <property type="match status" value="1"/>
</dbReference>
<dbReference type="Pfam" id="PF00072">
    <property type="entry name" value="Response_reg"/>
    <property type="match status" value="1"/>
</dbReference>
<dbReference type="Pfam" id="PF00486">
    <property type="entry name" value="Trans_reg_C"/>
    <property type="match status" value="1"/>
</dbReference>
<dbReference type="SMART" id="SM00448">
    <property type="entry name" value="REC"/>
    <property type="match status" value="1"/>
</dbReference>
<dbReference type="SMART" id="SM00862">
    <property type="entry name" value="Trans_reg_C"/>
    <property type="match status" value="1"/>
</dbReference>
<dbReference type="SUPFAM" id="SSF46894">
    <property type="entry name" value="C-terminal effector domain of the bipartite response regulators"/>
    <property type="match status" value="1"/>
</dbReference>
<dbReference type="SUPFAM" id="SSF52172">
    <property type="entry name" value="CheY-like"/>
    <property type="match status" value="1"/>
</dbReference>
<dbReference type="PROSITE" id="PS51755">
    <property type="entry name" value="OMPR_PHOB"/>
    <property type="match status" value="1"/>
</dbReference>
<dbReference type="PROSITE" id="PS50110">
    <property type="entry name" value="RESPONSE_REGULATORY"/>
    <property type="match status" value="1"/>
</dbReference>
<proteinExistence type="evidence at transcript level"/>
<gene>
    <name type="primary">regX3</name>
    <name type="ordered locus">MT0510</name>
</gene>
<sequence length="227" mass="24849">MTSVLIVEDEESLADPLAFLLRKEGFEATVVTDGPAALAEFDRAGADIVLLDLMLPGMSGTDVCKQLRARSSVPVIMVTARDSEIDKVVGLELGADDYVTKPYSARELIARIRAVLRRGGDDDSEMSDGVLESGPVRMDVERHVVSVNGDTITLPLKEFDLLEYLMRNSGRVLTRGQLIDRVWGADYVGDTKTLDVHVKRLRSKIEADPANPVHLVTVRGLGYKLEG</sequence>
<name>REGX3_MYCTO</name>
<reference key="1">
    <citation type="journal article" date="2002" name="J. Bacteriol.">
        <title>Whole-genome comparison of Mycobacterium tuberculosis clinical and laboratory strains.</title>
        <authorList>
            <person name="Fleischmann R.D."/>
            <person name="Alland D."/>
            <person name="Eisen J.A."/>
            <person name="Carpenter L."/>
            <person name="White O."/>
            <person name="Peterson J.D."/>
            <person name="DeBoy R.T."/>
            <person name="Dodson R.J."/>
            <person name="Gwinn M.L."/>
            <person name="Haft D.H."/>
            <person name="Hickey E.K."/>
            <person name="Kolonay J.F."/>
            <person name="Nelson W.C."/>
            <person name="Umayam L.A."/>
            <person name="Ermolaeva M.D."/>
            <person name="Salzberg S.L."/>
            <person name="Delcher A."/>
            <person name="Utterback T.R."/>
            <person name="Weidman J.F."/>
            <person name="Khouri H.M."/>
            <person name="Gill J."/>
            <person name="Mikula A."/>
            <person name="Bishai W."/>
            <person name="Jacobs W.R. Jr."/>
            <person name="Venter J.C."/>
            <person name="Fraser C.M."/>
        </authorList>
    </citation>
    <scope>NUCLEOTIDE SEQUENCE [LARGE SCALE GENOMIC DNA]</scope>
    <source>
        <strain>CDC 1551 / Oshkosh</strain>
    </source>
</reference>
<reference key="2">
    <citation type="journal article" date="2009" name="J. Infect. Dis.">
        <title>Phosphate depletion: a novel trigger for Mycobacterium tuberculosis persistence.</title>
        <authorList>
            <person name="Rifat D."/>
            <person name="Bishai W.R."/>
            <person name="Karakousis P.C."/>
        </authorList>
    </citation>
    <scope>FUNCTION</scope>
    <scope>INDUCTION</scope>
    <source>
        <strain>CDC 1551 / Oshkosh</strain>
    </source>
</reference>
<reference key="3">
    <citation type="journal article" date="2014" name="Microbiology">
        <title>Differential regulation of the two-component regulatory system senX3-regX3 in Mycobacterium tuberculosis.</title>
        <authorList>
            <person name="Rifat D."/>
            <person name="Karakousis P.C."/>
        </authorList>
    </citation>
    <scope>FUNCTION</scope>
    <scope>TRANSCRIPTIONAL REGULATION</scope>
    <source>
        <strain>CDC 1551 / Oshkosh</strain>
    </source>
</reference>
<reference key="4">
    <citation type="journal article" date="2014" name="BMC Microbiol.">
        <title>senX3-independent contribution of regX3 to Mycobacterium tuberculosis virulence.</title>
        <authorList>
            <person name="Rifat D."/>
            <person name="Belchis D.A."/>
            <person name="Karakousis P.C."/>
        </authorList>
    </citation>
    <scope>FUNCTION</scope>
    <scope>DISRUPTION PHENOTYPE</scope>
    <source>
        <strain>CDC 1551 / Oshkosh</strain>
    </source>
</reference>
<evidence type="ECO:0000250" key="1">
    <source>
        <dbReference type="UniProtKB" id="O07130"/>
    </source>
</evidence>
<evidence type="ECO:0000255" key="2">
    <source>
        <dbReference type="PROSITE-ProRule" id="PRU00169"/>
    </source>
</evidence>
<evidence type="ECO:0000255" key="3">
    <source>
        <dbReference type="PROSITE-ProRule" id="PRU01091"/>
    </source>
</evidence>
<evidence type="ECO:0000269" key="4">
    <source>
    </source>
</evidence>
<evidence type="ECO:0000269" key="5">
    <source>
    </source>
</evidence>
<evidence type="ECO:0000269" key="6">
    <source>
    </source>
</evidence>
<evidence type="ECO:0000305" key="7"/>
<protein>
    <recommendedName>
        <fullName evidence="7">Sensory transduction protein RegX3</fullName>
    </recommendedName>
</protein>
<comment type="function">
    <text evidence="4 5 6">Member of the two-component regulatory system SenX3/RegX3 involved in stress response (PubMed:19686042, PubMed:24722908). The system is involved in phosphate starvation response (PubMed:19686042, PubMed:24722908). Involved in virulence (PubMed:25344463). SenX3 and RegX3 are equally required for optimal growth and morphological response during phosphate depletion, but RegX3 may also play a SenX3-independent role in Mtb virulence (PubMed:25344463).</text>
</comment>
<comment type="induction">
    <text evidence="4 5">Induced during phosphate depletion and nutrient starvation (PubMed:19686042, PubMed:24722908). Part of the senX3-regX3 operon (PubMed:24722908). The two genes are separated by a rather long intercistronic region composed of a class of duplicated sequences named mycobacterial interspersed repetitive units (MIRUs) (PubMed:24722908). SenX3 and regX3 are coexpressed but also differentially transcribed during nutrient-rich and stress conditions (PubMed:24722908). RegX3 induction is mainly monocistronic during phosphate depletion (PubMed:24722908).</text>
</comment>
<comment type="PTM">
    <text evidence="1">Phosphorylated by SenX3.</text>
</comment>
<comment type="disruption phenotype">
    <text evidence="6">Disruption mutant shows a marked growth defect and premature entry into stationary phase relative to the isogenic wild-type during phosphate depletion (PubMed:25344463). Mutant shows markedly reduced survival during nutrient starvation (PubMed:25344463).</text>
</comment>
<comment type="sequence caution" evidence="7">
    <conflict type="erroneous initiation">
        <sequence resource="EMBL-CDS" id="AAK44733"/>
    </conflict>
    <text>Truncated N-terminus.</text>
</comment>